<dbReference type="EC" id="2.7.11.1" evidence="7"/>
<dbReference type="EC" id="3.6.1.-" evidence="1"/>
<dbReference type="EMBL" id="X90518">
    <property type="protein sequence ID" value="CAA62127.1"/>
    <property type="molecule type" value="Genomic_DNA"/>
</dbReference>
<dbReference type="EMBL" id="X94335">
    <property type="protein sequence ID" value="CAA64039.1"/>
    <property type="molecule type" value="Genomic_DNA"/>
</dbReference>
<dbReference type="EMBL" id="Z75027">
    <property type="protein sequence ID" value="CAA99317.1"/>
    <property type="molecule type" value="Genomic_DNA"/>
</dbReference>
<dbReference type="EMBL" id="X96739">
    <property type="protein sequence ID" value="CAA65511.1"/>
    <property type="molecule type" value="Genomic_DNA"/>
</dbReference>
<dbReference type="EMBL" id="BK006948">
    <property type="protein sequence ID" value="DAA10894.1"/>
    <property type="molecule type" value="Genomic_DNA"/>
</dbReference>
<dbReference type="PIR" id="S61006">
    <property type="entry name" value="S61006"/>
</dbReference>
<dbReference type="RefSeq" id="NP_014762.3">
    <property type="nucleotide sequence ID" value="NM_001183538.3"/>
</dbReference>
<dbReference type="SMR" id="Q12196"/>
<dbReference type="BioGRID" id="34515">
    <property type="interactions" value="728"/>
</dbReference>
<dbReference type="DIP" id="DIP-4146N"/>
<dbReference type="FunCoup" id="Q12196">
    <property type="interactions" value="1206"/>
</dbReference>
<dbReference type="IntAct" id="Q12196">
    <property type="interactions" value="117"/>
</dbReference>
<dbReference type="MINT" id="Q12196"/>
<dbReference type="STRING" id="4932.YOR119C"/>
<dbReference type="iPTMnet" id="Q12196"/>
<dbReference type="PaxDb" id="4932-YOR119C"/>
<dbReference type="PeptideAtlas" id="Q12196"/>
<dbReference type="EnsemblFungi" id="YOR119C_mRNA">
    <property type="protein sequence ID" value="YOR119C"/>
    <property type="gene ID" value="YOR119C"/>
</dbReference>
<dbReference type="GeneID" id="854286"/>
<dbReference type="KEGG" id="sce:YOR119C"/>
<dbReference type="AGR" id="SGD:S000005645"/>
<dbReference type="SGD" id="S000005645">
    <property type="gene designation" value="RIO1"/>
</dbReference>
<dbReference type="VEuPathDB" id="FungiDB:YOR119C"/>
<dbReference type="eggNOG" id="KOG2270">
    <property type="taxonomic scope" value="Eukaryota"/>
</dbReference>
<dbReference type="GeneTree" id="ENSGT00940000157075"/>
<dbReference type="HOGENOM" id="CLU_018693_4_1_1"/>
<dbReference type="InParanoid" id="Q12196"/>
<dbReference type="OMA" id="HPMSLDF"/>
<dbReference type="OrthoDB" id="205248at2759"/>
<dbReference type="BioCyc" id="YEAST:G3O-33648-MONOMER"/>
<dbReference type="BioGRID-ORCS" id="854286">
    <property type="hits" value="2 hits in 13 CRISPR screens"/>
</dbReference>
<dbReference type="CD-CODE" id="E03F929F">
    <property type="entry name" value="Stress granule"/>
</dbReference>
<dbReference type="PRO" id="PR:Q12196"/>
<dbReference type="Proteomes" id="UP000002311">
    <property type="component" value="Chromosome XV"/>
</dbReference>
<dbReference type="RNAct" id="Q12196">
    <property type="molecule type" value="protein"/>
</dbReference>
<dbReference type="GO" id="GO:0005737">
    <property type="term" value="C:cytoplasm"/>
    <property type="evidence" value="ECO:0000314"/>
    <property type="project" value="SGD"/>
</dbReference>
<dbReference type="GO" id="GO:0005829">
    <property type="term" value="C:cytosol"/>
    <property type="evidence" value="ECO:0000314"/>
    <property type="project" value="SGD"/>
</dbReference>
<dbReference type="GO" id="GO:0000324">
    <property type="term" value="C:fungal-type vacuole"/>
    <property type="evidence" value="ECO:0000314"/>
    <property type="project" value="SGD"/>
</dbReference>
<dbReference type="GO" id="GO:0000776">
    <property type="term" value="C:kinetochore"/>
    <property type="evidence" value="ECO:0000314"/>
    <property type="project" value="SGD"/>
</dbReference>
<dbReference type="GO" id="GO:0005739">
    <property type="term" value="C:mitochondrion"/>
    <property type="evidence" value="ECO:0000314"/>
    <property type="project" value="SGD"/>
</dbReference>
<dbReference type="GO" id="GO:0030874">
    <property type="term" value="C:nucleolar chromatin"/>
    <property type="evidence" value="ECO:0000314"/>
    <property type="project" value="SGD"/>
</dbReference>
<dbReference type="GO" id="GO:0005634">
    <property type="term" value="C:nucleus"/>
    <property type="evidence" value="ECO:0000314"/>
    <property type="project" value="SGD"/>
</dbReference>
<dbReference type="GO" id="GO:0030688">
    <property type="term" value="C:preribosome, small subunit precursor"/>
    <property type="evidence" value="ECO:0000318"/>
    <property type="project" value="GO_Central"/>
</dbReference>
<dbReference type="GO" id="GO:0005524">
    <property type="term" value="F:ATP binding"/>
    <property type="evidence" value="ECO:0007669"/>
    <property type="project" value="UniProtKB-KW"/>
</dbReference>
<dbReference type="GO" id="GO:0003682">
    <property type="term" value="F:chromatin binding"/>
    <property type="evidence" value="ECO:0000314"/>
    <property type="project" value="SGD"/>
</dbReference>
<dbReference type="GO" id="GO:0016787">
    <property type="term" value="F:hydrolase activity"/>
    <property type="evidence" value="ECO:0007669"/>
    <property type="project" value="UniProtKB-KW"/>
</dbReference>
<dbReference type="GO" id="GO:0046872">
    <property type="term" value="F:metal ion binding"/>
    <property type="evidence" value="ECO:0007669"/>
    <property type="project" value="UniProtKB-KW"/>
</dbReference>
<dbReference type="GO" id="GO:0004672">
    <property type="term" value="F:protein kinase activity"/>
    <property type="evidence" value="ECO:0000314"/>
    <property type="project" value="SGD"/>
</dbReference>
<dbReference type="GO" id="GO:0106310">
    <property type="term" value="F:protein serine kinase activity"/>
    <property type="evidence" value="ECO:0007669"/>
    <property type="project" value="RHEA"/>
</dbReference>
<dbReference type="GO" id="GO:0004674">
    <property type="term" value="F:protein serine/threonine kinase activity"/>
    <property type="evidence" value="ECO:0000318"/>
    <property type="project" value="GO_Central"/>
</dbReference>
<dbReference type="GO" id="GO:0051301">
    <property type="term" value="P:cell division"/>
    <property type="evidence" value="ECO:0007669"/>
    <property type="project" value="UniProtKB-KW"/>
</dbReference>
<dbReference type="GO" id="GO:0030490">
    <property type="term" value="P:maturation of SSU-rRNA"/>
    <property type="evidence" value="ECO:0000318"/>
    <property type="project" value="GO_Central"/>
</dbReference>
<dbReference type="GO" id="GO:0000462">
    <property type="term" value="P:maturation of SSU-rRNA from tricistronic rRNA transcript (SSU-rRNA, 5.8S rRNA, LSU-rRNA)"/>
    <property type="evidence" value="ECO:0000314"/>
    <property type="project" value="SGD"/>
</dbReference>
<dbReference type="GO" id="GO:0016479">
    <property type="term" value="P:negative regulation of transcription by RNA polymerase I"/>
    <property type="evidence" value="ECO:0000315"/>
    <property type="project" value="SGD"/>
</dbReference>
<dbReference type="GO" id="GO:0000122">
    <property type="term" value="P:negative regulation of transcription by RNA polymerase II"/>
    <property type="evidence" value="ECO:0000315"/>
    <property type="project" value="SGD"/>
</dbReference>
<dbReference type="GO" id="GO:2000234">
    <property type="term" value="P:positive regulation of rRNA processing"/>
    <property type="evidence" value="ECO:0000315"/>
    <property type="project" value="SGD"/>
</dbReference>
<dbReference type="GO" id="GO:0007096">
    <property type="term" value="P:regulation of exit from mitosis"/>
    <property type="evidence" value="ECO:0000314"/>
    <property type="project" value="SGD"/>
</dbReference>
<dbReference type="GO" id="GO:0090234">
    <property type="term" value="P:regulation of kinetochore assembly"/>
    <property type="evidence" value="ECO:0000315"/>
    <property type="project" value="SGD"/>
</dbReference>
<dbReference type="CDD" id="cd05147">
    <property type="entry name" value="RIO1_euk"/>
    <property type="match status" value="1"/>
</dbReference>
<dbReference type="FunFam" id="1.10.510.10:FF:000755">
    <property type="entry name" value="Homoserine kinase"/>
    <property type="match status" value="1"/>
</dbReference>
<dbReference type="FunFam" id="3.30.200.20:FF:000403">
    <property type="entry name" value="Serine/threonine-protein kinase RIO1"/>
    <property type="match status" value="1"/>
</dbReference>
<dbReference type="Gene3D" id="3.30.200.20">
    <property type="entry name" value="Phosphorylase Kinase, domain 1"/>
    <property type="match status" value="1"/>
</dbReference>
<dbReference type="Gene3D" id="1.10.510.10">
    <property type="entry name" value="Transferase(Phosphotransferase) domain 1"/>
    <property type="match status" value="1"/>
</dbReference>
<dbReference type="InterPro" id="IPR011009">
    <property type="entry name" value="Kinase-like_dom_sf"/>
</dbReference>
<dbReference type="InterPro" id="IPR000719">
    <property type="entry name" value="Prot_kinase_dom"/>
</dbReference>
<dbReference type="InterPro" id="IPR051272">
    <property type="entry name" value="RIO-type_Ser/Thr_kinase"/>
</dbReference>
<dbReference type="InterPro" id="IPR018934">
    <property type="entry name" value="RIO_dom"/>
</dbReference>
<dbReference type="InterPro" id="IPR000687">
    <property type="entry name" value="RIO_kinase"/>
</dbReference>
<dbReference type="InterPro" id="IPR018935">
    <property type="entry name" value="RIO_kinase_CS"/>
</dbReference>
<dbReference type="InterPro" id="IPR017407">
    <property type="entry name" value="Ser/Thr_kinase_Rio1"/>
</dbReference>
<dbReference type="PANTHER" id="PTHR45723">
    <property type="entry name" value="SERINE/THREONINE-PROTEIN KINASE RIO1"/>
    <property type="match status" value="1"/>
</dbReference>
<dbReference type="Pfam" id="PF01163">
    <property type="entry name" value="RIO1"/>
    <property type="match status" value="1"/>
</dbReference>
<dbReference type="PIRSF" id="PIRSF038147">
    <property type="entry name" value="Ser/Thr_PK_RIO1"/>
    <property type="match status" value="1"/>
</dbReference>
<dbReference type="SMART" id="SM00090">
    <property type="entry name" value="RIO"/>
    <property type="match status" value="1"/>
</dbReference>
<dbReference type="SUPFAM" id="SSF56112">
    <property type="entry name" value="Protein kinase-like (PK-like)"/>
    <property type="match status" value="1"/>
</dbReference>
<dbReference type="PROSITE" id="PS50011">
    <property type="entry name" value="PROTEIN_KINASE_DOM"/>
    <property type="match status" value="1"/>
</dbReference>
<dbReference type="PROSITE" id="PS01245">
    <property type="entry name" value="RIO1"/>
    <property type="match status" value="1"/>
</dbReference>
<protein>
    <recommendedName>
        <fullName>Serine/threonine-protein kinase RIO1</fullName>
        <ecNumber evidence="7">2.7.11.1</ecNumber>
        <ecNumber evidence="1">3.6.1.-</ecNumber>
    </recommendedName>
    <alternativeName>
        <fullName>Ribosomal RNA-processing protein 10</fullName>
    </alternativeName>
</protein>
<accession>Q12196</accession>
<accession>D6W2H8</accession>
<accession>Q00602</accession>
<name>RIO1_YEAST</name>
<sequence length="484" mass="56122">MSLEDKFDSLSVSQGASDHINNQLLEKYSHKIKTDELSFSRAKTSKDKANRATVENVLDPRTMRFLKSMVTRGVIADLNGCLSTGKEANVYHAFAGTGKAPVIDEETGQYEVLETDGSRAEYAIKIYKTSILVFKDRERYVDGEFRFRNSRSQHNPRKMIKIWAEKEFRNLKRIYQSGVIPAPKPIEVKNNVLVMEFLSRGNGFASPKLKDYPYKNRDEIFHYYHTMVAYMRLLYQVCRLVHADLSEYNTIVHDDKLYMIDVSQSVEPEHPMSLDFLRMDIKNVNLYFEKMGISIFPERVIFQFVISETLEKFKGDYNNISALVAYIASNLPIKSTEQDEAEDEIFRSLHLVRSLGGLEERDFDRYTDGKFDLLKSLIAHDNERNFAASEQFEFDNADHECSSGTEEFSDDEEDGSSGSEEDDEEEGEYYDDDEPKVLKGKKHEDKDLKKLRKQEAKDAKREKRKTKVKKHIKKKLVKKTKSKK</sequence>
<organism>
    <name type="scientific">Saccharomyces cerevisiae (strain ATCC 204508 / S288c)</name>
    <name type="common">Baker's yeast</name>
    <dbReference type="NCBI Taxonomy" id="559292"/>
    <lineage>
        <taxon>Eukaryota</taxon>
        <taxon>Fungi</taxon>
        <taxon>Dikarya</taxon>
        <taxon>Ascomycota</taxon>
        <taxon>Saccharomycotina</taxon>
        <taxon>Saccharomycetes</taxon>
        <taxon>Saccharomycetales</taxon>
        <taxon>Saccharomycetaceae</taxon>
        <taxon>Saccharomyces</taxon>
    </lineage>
</organism>
<keyword id="KW-0067">ATP-binding</keyword>
<keyword id="KW-0131">Cell cycle</keyword>
<keyword id="KW-0132">Cell division</keyword>
<keyword id="KW-0963">Cytoplasm</keyword>
<keyword id="KW-0378">Hydrolase</keyword>
<keyword id="KW-0418">Kinase</keyword>
<keyword id="KW-0460">Magnesium</keyword>
<keyword id="KW-0479">Metal-binding</keyword>
<keyword id="KW-0498">Mitosis</keyword>
<keyword id="KW-0547">Nucleotide-binding</keyword>
<keyword id="KW-0597">Phosphoprotein</keyword>
<keyword id="KW-1185">Reference proteome</keyword>
<keyword id="KW-0690">Ribosome biogenesis</keyword>
<keyword id="KW-0723">Serine/threonine-protein kinase</keyword>
<keyword id="KW-0808">Transferase</keyword>
<comment type="function">
    <text evidence="1 5 6 7 10">Required for the final endonucleolytic cleavage at site D converting 20S pre-rRNA into the mature 18S rRNA. Required for the final steps of cytoplasmic maturation of the 40S ribosomal subunit. The association with the very late 40S subunit intermediate seems to follow RIO2 association with precursors of the 40S subunit and may involve a translation-like checkpoint point cycle preceeding the binding to the 60S ribosomal subunit. Despite the protein kinase domain is proposed to act predominantly as an ATPase. The catalytic activity regulates its dynamic association with the 40S subunit. Has a role in the cell cycle where it is required for entrance into S-phase and in the control of the onset of anaphase. Appears to also be involved in the maintenance of chromosome stability and correct mitotic segregation.</text>
</comment>
<comment type="catalytic activity">
    <reaction evidence="7">
        <text>L-seryl-[protein] + ATP = O-phospho-L-seryl-[protein] + ADP + H(+)</text>
        <dbReference type="Rhea" id="RHEA:17989"/>
        <dbReference type="Rhea" id="RHEA-COMP:9863"/>
        <dbReference type="Rhea" id="RHEA-COMP:11604"/>
        <dbReference type="ChEBI" id="CHEBI:15378"/>
        <dbReference type="ChEBI" id="CHEBI:29999"/>
        <dbReference type="ChEBI" id="CHEBI:30616"/>
        <dbReference type="ChEBI" id="CHEBI:83421"/>
        <dbReference type="ChEBI" id="CHEBI:456216"/>
        <dbReference type="EC" id="2.7.11.1"/>
    </reaction>
</comment>
<comment type="catalytic activity">
    <reaction evidence="7">
        <text>L-threonyl-[protein] + ATP = O-phospho-L-threonyl-[protein] + ADP + H(+)</text>
        <dbReference type="Rhea" id="RHEA:46608"/>
        <dbReference type="Rhea" id="RHEA-COMP:11060"/>
        <dbReference type="Rhea" id="RHEA-COMP:11605"/>
        <dbReference type="ChEBI" id="CHEBI:15378"/>
        <dbReference type="ChEBI" id="CHEBI:30013"/>
        <dbReference type="ChEBI" id="CHEBI:30616"/>
        <dbReference type="ChEBI" id="CHEBI:61977"/>
        <dbReference type="ChEBI" id="CHEBI:456216"/>
        <dbReference type="EC" id="2.7.11.1"/>
    </reaction>
</comment>
<comment type="catalytic activity">
    <reaction evidence="1">
        <text>ATP + H2O = ADP + phosphate + H(+)</text>
        <dbReference type="Rhea" id="RHEA:13065"/>
        <dbReference type="ChEBI" id="CHEBI:15377"/>
        <dbReference type="ChEBI" id="CHEBI:15378"/>
        <dbReference type="ChEBI" id="CHEBI:30616"/>
        <dbReference type="ChEBI" id="CHEBI:43474"/>
        <dbReference type="ChEBI" id="CHEBI:456216"/>
    </reaction>
</comment>
<comment type="cofactor">
    <cofactor evidence="7">
        <name>Mg(2+)</name>
        <dbReference type="ChEBI" id="CHEBI:18420"/>
    </cofactor>
    <text evidence="11">Can use both Mg(2+) and Mn(2+) in vitro and shows higher activity with Mn(2+) but Mg(2+) is likely to be the in vivo cofactor.</text>
</comment>
<comment type="subunit">
    <text evidence="9">Interacts with CKA2.</text>
</comment>
<comment type="subcellular location">
    <subcellularLocation>
        <location evidence="5 7 8">Cytoplasm</location>
    </subcellularLocation>
</comment>
<comment type="PTM">
    <text evidence="7 9">Autophosphorylated. Phosphorylated by casein kinase II (CK2). Phosphorylation by CK2 stimulates RIO1 kinase activity and targets it for degradation at the G1/S transition of the cell cycle.</text>
</comment>
<comment type="similarity">
    <text evidence="11">Belongs to the protein kinase superfamily. RIO-type Ser/Thr kinase family.</text>
</comment>
<reference key="1">
    <citation type="journal article" date="1996" name="Yeast">
        <title>Sequencing and analysis of 51 kb on the right arm of chromosome XV from Saccharomyces cerevisiae reveals 30 open reading frames.</title>
        <authorList>
            <person name="Wiemann S."/>
            <person name="Rechmann S."/>
            <person name="Benes V."/>
            <person name="Voss H."/>
            <person name="Schwager C."/>
            <person name="Vlcek C."/>
            <person name="Stegemann J."/>
            <person name="Zimmermann J."/>
            <person name="Erfle H."/>
            <person name="Paces V."/>
            <person name="Ansorge W."/>
        </authorList>
    </citation>
    <scope>NUCLEOTIDE SEQUENCE [GENOMIC DNA]</scope>
    <source>
        <strain>ATCC 96604 / S288c / FY1679</strain>
    </source>
</reference>
<reference key="2">
    <citation type="journal article" date="1997" name="Yeast">
        <title>DNA sequencing and analysis of 130 kb from yeast chromosome XV.</title>
        <authorList>
            <person name="Voss H."/>
            <person name="Benes V."/>
            <person name="Andrade M.A."/>
            <person name="Valencia A."/>
            <person name="Rechmann S."/>
            <person name="Teodoru C."/>
            <person name="Schwager C."/>
            <person name="Paces V."/>
            <person name="Sander C."/>
            <person name="Ansorge W."/>
        </authorList>
    </citation>
    <scope>NUCLEOTIDE SEQUENCE [GENOMIC DNA]</scope>
</reference>
<reference key="3">
    <citation type="journal article" date="1997" name="Nature">
        <title>The nucleotide sequence of Saccharomyces cerevisiae chromosome XV.</title>
        <authorList>
            <person name="Dujon B."/>
            <person name="Albermann K."/>
            <person name="Aldea M."/>
            <person name="Alexandraki D."/>
            <person name="Ansorge W."/>
            <person name="Arino J."/>
            <person name="Benes V."/>
            <person name="Bohn C."/>
            <person name="Bolotin-Fukuhara M."/>
            <person name="Bordonne R."/>
            <person name="Boyer J."/>
            <person name="Camasses A."/>
            <person name="Casamayor A."/>
            <person name="Casas C."/>
            <person name="Cheret G."/>
            <person name="Cziepluch C."/>
            <person name="Daignan-Fornier B."/>
            <person name="Dang V.-D."/>
            <person name="de Haan M."/>
            <person name="Delius H."/>
            <person name="Durand P."/>
            <person name="Fairhead C."/>
            <person name="Feldmann H."/>
            <person name="Gaillon L."/>
            <person name="Galisson F."/>
            <person name="Gamo F.-J."/>
            <person name="Gancedo C."/>
            <person name="Goffeau A."/>
            <person name="Goulding S.E."/>
            <person name="Grivell L.A."/>
            <person name="Habbig B."/>
            <person name="Hand N.J."/>
            <person name="Hani J."/>
            <person name="Hattenhorst U."/>
            <person name="Hebling U."/>
            <person name="Hernando Y."/>
            <person name="Herrero E."/>
            <person name="Heumann K."/>
            <person name="Hiesel R."/>
            <person name="Hilger F."/>
            <person name="Hofmann B."/>
            <person name="Hollenberg C.P."/>
            <person name="Hughes B."/>
            <person name="Jauniaux J.-C."/>
            <person name="Kalogeropoulos A."/>
            <person name="Katsoulou C."/>
            <person name="Kordes E."/>
            <person name="Lafuente M.J."/>
            <person name="Landt O."/>
            <person name="Louis E.J."/>
            <person name="Maarse A.C."/>
            <person name="Madania A."/>
            <person name="Mannhaupt G."/>
            <person name="Marck C."/>
            <person name="Martin R.P."/>
            <person name="Mewes H.-W."/>
            <person name="Michaux G."/>
            <person name="Paces V."/>
            <person name="Parle-McDermott A.G."/>
            <person name="Pearson B.M."/>
            <person name="Perrin A."/>
            <person name="Pettersson B."/>
            <person name="Poch O."/>
            <person name="Pohl T.M."/>
            <person name="Poirey R."/>
            <person name="Portetelle D."/>
            <person name="Pujol A."/>
            <person name="Purnelle B."/>
            <person name="Ramezani Rad M."/>
            <person name="Rechmann S."/>
            <person name="Schwager C."/>
            <person name="Schweizer M."/>
            <person name="Sor F."/>
            <person name="Sterky F."/>
            <person name="Tarassov I.A."/>
            <person name="Teodoru C."/>
            <person name="Tettelin H."/>
            <person name="Thierry A."/>
            <person name="Tobiasch E."/>
            <person name="Tzermia M."/>
            <person name="Uhlen M."/>
            <person name="Unseld M."/>
            <person name="Valens M."/>
            <person name="Vandenbol M."/>
            <person name="Vetter I."/>
            <person name="Vlcek C."/>
            <person name="Voet M."/>
            <person name="Volckaert G."/>
            <person name="Voss H."/>
            <person name="Wambutt R."/>
            <person name="Wedler H."/>
            <person name="Wiemann S."/>
            <person name="Winsor B."/>
            <person name="Wolfe K.H."/>
            <person name="Zollner A."/>
            <person name="Zumstein E."/>
            <person name="Kleine K."/>
        </authorList>
    </citation>
    <scope>NUCLEOTIDE SEQUENCE [LARGE SCALE GENOMIC DNA]</scope>
    <source>
        <strain>ATCC 204508 / S288c</strain>
    </source>
</reference>
<reference key="4">
    <citation type="journal article" date="2014" name="G3 (Bethesda)">
        <title>The reference genome sequence of Saccharomyces cerevisiae: Then and now.</title>
        <authorList>
            <person name="Engel S.R."/>
            <person name="Dietrich F.S."/>
            <person name="Fisk D.G."/>
            <person name="Binkley G."/>
            <person name="Balakrishnan R."/>
            <person name="Costanzo M.C."/>
            <person name="Dwight S.S."/>
            <person name="Hitz B.C."/>
            <person name="Karra K."/>
            <person name="Nash R.S."/>
            <person name="Weng S."/>
            <person name="Wong E.D."/>
            <person name="Lloyd P."/>
            <person name="Skrzypek M.S."/>
            <person name="Miyasato S.R."/>
            <person name="Simison M."/>
            <person name="Cherry J.M."/>
        </authorList>
    </citation>
    <scope>GENOME REANNOTATION</scope>
    <source>
        <strain>ATCC 204508 / S288c</strain>
    </source>
</reference>
<reference key="5">
    <citation type="submission" date="1996-03" db="EMBL/GenBank/DDBJ databases">
        <authorList>
            <person name="Angermayr M."/>
        </authorList>
    </citation>
    <scope>NUCLEOTIDE SEQUENCE [GENOMIC DNA] OF 1-354</scope>
    <source>
        <strain>ATCC 25657 / D273-10B</strain>
    </source>
</reference>
<reference key="6">
    <citation type="journal article" date="2001" name="EMBO J.">
        <title>Processing of 20S pre-rRNA to 18S ribosomal RNA in yeast requires Rrp10p, an essential non-ribosomal cytoplasmic protein.</title>
        <authorList>
            <person name="Vanrobays E."/>
            <person name="Gleizes P.-E."/>
            <person name="Bousquet-Antonelli C."/>
            <person name="Noaillac-Depeyre J."/>
            <person name="Caizergues-Ferrer M."/>
            <person name="Gelugne J.-P."/>
        </authorList>
    </citation>
    <scope>FUNCTION</scope>
    <scope>SUBCELLULAR LOCATION</scope>
</reference>
<reference key="7">
    <citation type="journal article" date="2002" name="FEBS Lett.">
        <title>RIO1, an extraordinary novel protein kinase.</title>
        <authorList>
            <person name="Angermayr M."/>
            <person name="Bandlow W."/>
        </authorList>
    </citation>
    <scope>FUNCTION</scope>
    <scope>CATALYTIC ACTIVITY</scope>
    <scope>COFACTOR</scope>
    <scope>SUBCELLULAR LOCATION</scope>
    <scope>PHOSPHORYLATION</scope>
    <scope>MUTAGENESIS OF LYS-125 AND ASP-244</scope>
</reference>
<reference key="8">
    <citation type="journal article" date="2002" name="Mol. Microbiol.">
        <title>Yeast Rio1p is the founding member of a novel subfamily of protein serine kinases involved in the control of cell cycle progression.</title>
        <authorList>
            <person name="Angermayr M."/>
            <person name="Roidl A."/>
            <person name="Bandlow W."/>
        </authorList>
    </citation>
    <scope>FUNCTION</scope>
</reference>
<reference key="9">
    <citation type="journal article" date="2003" name="Mol. Cell. Biol.">
        <title>Late cytoplasmic maturation of the small ribosomal subunit requires RIO proteins in Saccharomyces cerevisiae.</title>
        <authorList>
            <person name="Vanrobays E."/>
            <person name="Gelugne J.-P."/>
            <person name="Gleizes P.-E."/>
            <person name="Caizergues-Ferrer M."/>
        </authorList>
    </citation>
    <scope>SUBCELLULAR LOCATION</scope>
</reference>
<reference key="10">
    <citation type="journal article" date="2007" name="FEBS J.">
        <title>Protein kinase CK2 activates the atypical Rio1p kinase and promotes its cell-cycle phase-dependent degradation in yeast.</title>
        <authorList>
            <person name="Angermayr M."/>
            <person name="Hochleitner E."/>
            <person name="Lottspeich F."/>
            <person name="Bandlow W."/>
        </authorList>
    </citation>
    <scope>INTERACTION WITH CKA2</scope>
    <scope>PHOSPHORYLATION AT SER-402; SER-403; SER-409; SER-416; SER-417 AND SER-419</scope>
</reference>
<reference key="11">
    <citation type="journal article" date="2014" name="Nucleic Acids Res.">
        <title>Dominant Rio1 kinase/ATPase catalytic mutant induces trapping of late pre-40S biogenesis factors in 80S-like ribosomes.</title>
        <authorList>
            <person name="Ferreira-Cerca S."/>
            <person name="Kiburu I."/>
            <person name="Thomson E."/>
            <person name="LaRonde N."/>
            <person name="Hurt E."/>
        </authorList>
    </citation>
    <scope>FUNCTION</scope>
    <scope>MUTAGENESIS OF ASP-244 AND ASP-261</scope>
</reference>
<evidence type="ECO:0000250" key="1">
    <source>
        <dbReference type="UniProtKB" id="G0S3J5"/>
    </source>
</evidence>
<evidence type="ECO:0000250" key="2">
    <source>
        <dbReference type="UniProtKB" id="Q9BRS2"/>
    </source>
</evidence>
<evidence type="ECO:0000255" key="3">
    <source>
        <dbReference type="PROSITE-ProRule" id="PRU00159"/>
    </source>
</evidence>
<evidence type="ECO:0000256" key="4">
    <source>
        <dbReference type="SAM" id="MobiDB-lite"/>
    </source>
</evidence>
<evidence type="ECO:0000269" key="5">
    <source>
    </source>
</evidence>
<evidence type="ECO:0000269" key="6">
    <source>
    </source>
</evidence>
<evidence type="ECO:0000269" key="7">
    <source>
    </source>
</evidence>
<evidence type="ECO:0000269" key="8">
    <source>
    </source>
</evidence>
<evidence type="ECO:0000269" key="9">
    <source>
    </source>
</evidence>
<evidence type="ECO:0000269" key="10">
    <source>
    </source>
</evidence>
<evidence type="ECO:0000305" key="11"/>
<proteinExistence type="evidence at protein level"/>
<feature type="chain" id="PRO_0000213531" description="Serine/threonine-protein kinase RIO1">
    <location>
        <begin position="1"/>
        <end position="484"/>
    </location>
</feature>
<feature type="domain" description="Protein kinase" evidence="3">
    <location>
        <begin position="76"/>
        <end position="402"/>
    </location>
</feature>
<feature type="region of interest" description="Disordered" evidence="4">
    <location>
        <begin position="398"/>
        <end position="484"/>
    </location>
</feature>
<feature type="region of interest" description="Interaction with CKA2" evidence="9">
    <location>
        <begin position="403"/>
        <end position="484"/>
    </location>
</feature>
<feature type="region of interest" description="Association with (pre-)40S ribosomal subunit" evidence="10">
    <location>
        <begin position="440"/>
        <end position="484"/>
    </location>
</feature>
<feature type="compositionally biased region" description="Acidic residues" evidence="4">
    <location>
        <begin position="407"/>
        <end position="434"/>
    </location>
</feature>
<feature type="compositionally biased region" description="Basic and acidic residues" evidence="4">
    <location>
        <begin position="442"/>
        <end position="461"/>
    </location>
</feature>
<feature type="compositionally biased region" description="Basic residues" evidence="4">
    <location>
        <begin position="462"/>
        <end position="484"/>
    </location>
</feature>
<feature type="active site" description="Proton acceptor">
    <location>
        <position position="244"/>
    </location>
</feature>
<feature type="active site" description="4-aspartylphosphate intermediate" evidence="2">
    <location>
        <position position="261"/>
    </location>
</feature>
<feature type="binding site" evidence="2">
    <location>
        <position position="125"/>
    </location>
    <ligand>
        <name>ATP</name>
        <dbReference type="ChEBI" id="CHEBI:30616"/>
    </ligand>
</feature>
<feature type="binding site" evidence="2">
    <location>
        <position position="198"/>
    </location>
    <ligand>
        <name>ATP</name>
        <dbReference type="ChEBI" id="CHEBI:30616"/>
    </ligand>
</feature>
<feature type="binding site" evidence="2">
    <location>
        <position position="249"/>
    </location>
    <ligand>
        <name>Mg(2+)</name>
        <dbReference type="ChEBI" id="CHEBI:18420"/>
    </ligand>
</feature>
<feature type="binding site" evidence="2">
    <location>
        <position position="261"/>
    </location>
    <ligand>
        <name>Mg(2+)</name>
        <dbReference type="ChEBI" id="CHEBI:18420"/>
    </ligand>
</feature>
<feature type="modified residue" description="Phosphoserine; by CK2" evidence="9">
    <location>
        <position position="402"/>
    </location>
</feature>
<feature type="modified residue" description="Phosphoserine; by CK2" evidence="9">
    <location>
        <position position="403"/>
    </location>
</feature>
<feature type="modified residue" description="Phosphoserine; by CK2" evidence="9">
    <location>
        <position position="409"/>
    </location>
</feature>
<feature type="modified residue" description="Phosphoserine; by CK2" evidence="9">
    <location>
        <position position="416"/>
    </location>
</feature>
<feature type="modified residue" description="Phosphoserine; by CK2" evidence="9">
    <location>
        <position position="417"/>
    </location>
</feature>
<feature type="modified residue" description="Phosphoserine; by CK2" evidence="9">
    <location>
        <position position="419"/>
    </location>
</feature>
<feature type="mutagenesis site" description="No activity." evidence="7">
    <original>K</original>
    <variation>R</variation>
    <location>
        <position position="125"/>
    </location>
</feature>
<feature type="mutagenesis site" description="Inhibits cell growth; enhances association with pre-40S ribosomal subunits; inhibits 20S pre-rRNA to mature 18S rRNA processing; translation initiation-like defect." evidence="10">
    <original>D</original>
    <variation>A</variation>
    <location>
        <position position="244"/>
    </location>
</feature>
<feature type="mutagenesis site" description="No activity." evidence="7">
    <original>D</original>
    <variation>E</variation>
    <variation>N</variation>
    <location>
        <position position="244"/>
    </location>
</feature>
<feature type="mutagenesis site" description="Inhibits cell growth." evidence="10">
    <original>D</original>
    <variation>A</variation>
    <location>
        <position position="261"/>
    </location>
</feature>
<feature type="sequence conflict" description="In Ref. 5; CAA65511." evidence="11" ref="5">
    <original>G</original>
    <variation>A</variation>
    <location>
        <position position="203"/>
    </location>
</feature>
<gene>
    <name type="primary">RIO1</name>
    <name type="synonym">RRP10</name>
    <name type="ordered locus">YOR119C</name>
    <name type="ORF">O3266</name>
    <name type="ORF">YOR3266C</name>
</gene>